<reference key="1">
    <citation type="journal article" date="2002" name="Proc. Natl. Acad. Sci. U.S.A.">
        <title>The genome sequence of the facultative intracellular pathogen Brucella melitensis.</title>
        <authorList>
            <person name="DelVecchio V.G."/>
            <person name="Kapatral V."/>
            <person name="Redkar R.J."/>
            <person name="Patra G."/>
            <person name="Mujer C."/>
            <person name="Los T."/>
            <person name="Ivanova N."/>
            <person name="Anderson I."/>
            <person name="Bhattacharyya A."/>
            <person name="Lykidis A."/>
            <person name="Reznik G."/>
            <person name="Jablonski L."/>
            <person name="Larsen N."/>
            <person name="D'Souza M."/>
            <person name="Bernal A."/>
            <person name="Mazur M."/>
            <person name="Goltsman E."/>
            <person name="Selkov E."/>
            <person name="Elzer P.H."/>
            <person name="Hagius S."/>
            <person name="O'Callaghan D."/>
            <person name="Letesson J.-J."/>
            <person name="Haselkorn R."/>
            <person name="Kyrpides N.C."/>
            <person name="Overbeek R."/>
        </authorList>
    </citation>
    <scope>NUCLEOTIDE SEQUENCE [LARGE SCALE GENOMIC DNA]</scope>
    <source>
        <strain>ATCC 23456 / CCUG 17765 / NCTC 10094 / 16M</strain>
    </source>
</reference>
<comment type="function">
    <text evidence="1">Participates actively in the response to hyperosmotic and heat shock by preventing the aggregation of stress-denatured proteins and by disaggregating proteins, also in an autonomous, DnaK-independent fashion. Unfolded proteins bind initially to DnaJ; upon interaction with the DnaJ-bound protein, DnaK hydrolyzes its bound ATP, resulting in the formation of a stable complex. GrpE releases ADP from DnaK; ATP binding to DnaK triggers the release of the substrate protein, thus completing the reaction cycle. Several rounds of ATP-dependent interactions between DnaJ, DnaK and GrpE are required for fully efficient folding. Also involved, together with DnaK and GrpE, in the DNA replication of plasmids through activation of initiation proteins.</text>
</comment>
<comment type="cofactor">
    <cofactor evidence="1">
        <name>Zn(2+)</name>
        <dbReference type="ChEBI" id="CHEBI:29105"/>
    </cofactor>
    <text evidence="1">Binds 2 Zn(2+) ions per monomer.</text>
</comment>
<comment type="subunit">
    <text evidence="1">Homodimer.</text>
</comment>
<comment type="subcellular location">
    <subcellularLocation>
        <location evidence="1">Cytoplasm</location>
    </subcellularLocation>
</comment>
<comment type="domain">
    <text evidence="1">The J domain is necessary and sufficient to stimulate DnaK ATPase activity. Zinc center 1 plays an important role in the autonomous, DnaK-independent chaperone activity of DnaJ. Zinc center 2 is essential for interaction with DnaK and for DnaJ activity.</text>
</comment>
<comment type="similarity">
    <text evidence="1">Belongs to the DnaJ family.</text>
</comment>
<protein>
    <recommendedName>
        <fullName evidence="1">Chaperone protein DnaJ</fullName>
    </recommendedName>
</protein>
<name>DNAJ_BRUME</name>
<sequence>MKIDYYEALGVTRTADDKTLKAAFRKLAMQYHPDRNPDDPEAERKFKEIGEAYETLKDPQKRAAYDRFGHAAFENGGMGGGFGNGFGGAGGFADIFEDIFGEMMGGGRRRSNGGRERGADLRYNMEVTLEEAYAGKTAQIRVPTSITCDECSGSGAKPGSQPTTCTMCSGSGRVRAAQGFFSVERTCPGCNGRGQIIKDPCEKCHGQGRVTQERSLSVNIPAGIEDGTRIRLAGEGEAGLRGGPAGDLYIFLSVKPHEFFQRDGADLYCKVPISMTTAALGGQFEVSTLDGTQTRVKVPEGTQNGKQFRLKGKGMPVLRQSVTGDLYIQIDIETPQNLSKRQRELLEEFEKLSSQENSPKSAGFFSRMKEFFEGIGE</sequence>
<organism>
    <name type="scientific">Brucella melitensis biotype 1 (strain ATCC 23456 / CCUG 17765 / NCTC 10094 / 16M)</name>
    <dbReference type="NCBI Taxonomy" id="224914"/>
    <lineage>
        <taxon>Bacteria</taxon>
        <taxon>Pseudomonadati</taxon>
        <taxon>Pseudomonadota</taxon>
        <taxon>Alphaproteobacteria</taxon>
        <taxon>Hyphomicrobiales</taxon>
        <taxon>Brucellaceae</taxon>
        <taxon>Brucella/Ochrobactrum group</taxon>
        <taxon>Brucella</taxon>
    </lineage>
</organism>
<keyword id="KW-0143">Chaperone</keyword>
<keyword id="KW-0963">Cytoplasm</keyword>
<keyword id="KW-0235">DNA replication</keyword>
<keyword id="KW-0479">Metal-binding</keyword>
<keyword id="KW-0677">Repeat</keyword>
<keyword id="KW-0346">Stress response</keyword>
<keyword id="KW-0862">Zinc</keyword>
<keyword id="KW-0863">Zinc-finger</keyword>
<evidence type="ECO:0000255" key="1">
    <source>
        <dbReference type="HAMAP-Rule" id="MF_01152"/>
    </source>
</evidence>
<gene>
    <name evidence="1" type="primary">dnaJ</name>
    <name type="ordered locus">BMEI2001</name>
</gene>
<dbReference type="EMBL" id="AE008917">
    <property type="protein sequence ID" value="AAL53182.1"/>
    <property type="molecule type" value="Genomic_DNA"/>
</dbReference>
<dbReference type="PIR" id="AC3502">
    <property type="entry name" value="AC3502"/>
</dbReference>
<dbReference type="RefSeq" id="WP_004684564.1">
    <property type="nucleotide sequence ID" value="NZ_GG703778.1"/>
</dbReference>
<dbReference type="SMR" id="Q8YE77"/>
<dbReference type="GeneID" id="55591692"/>
<dbReference type="KEGG" id="bme:BMEI2001"/>
<dbReference type="KEGG" id="bmel:DK63_1490"/>
<dbReference type="PATRIC" id="fig|224914.52.peg.1571"/>
<dbReference type="eggNOG" id="COG0484">
    <property type="taxonomic scope" value="Bacteria"/>
</dbReference>
<dbReference type="PhylomeDB" id="Q8YE77"/>
<dbReference type="Proteomes" id="UP000000419">
    <property type="component" value="Chromosome I"/>
</dbReference>
<dbReference type="GO" id="GO:0005737">
    <property type="term" value="C:cytoplasm"/>
    <property type="evidence" value="ECO:0007669"/>
    <property type="project" value="UniProtKB-SubCell"/>
</dbReference>
<dbReference type="GO" id="GO:0005524">
    <property type="term" value="F:ATP binding"/>
    <property type="evidence" value="ECO:0007669"/>
    <property type="project" value="InterPro"/>
</dbReference>
<dbReference type="GO" id="GO:0031072">
    <property type="term" value="F:heat shock protein binding"/>
    <property type="evidence" value="ECO:0007669"/>
    <property type="project" value="InterPro"/>
</dbReference>
<dbReference type="GO" id="GO:0051082">
    <property type="term" value="F:unfolded protein binding"/>
    <property type="evidence" value="ECO:0007669"/>
    <property type="project" value="UniProtKB-UniRule"/>
</dbReference>
<dbReference type="GO" id="GO:0008270">
    <property type="term" value="F:zinc ion binding"/>
    <property type="evidence" value="ECO:0007669"/>
    <property type="project" value="UniProtKB-UniRule"/>
</dbReference>
<dbReference type="GO" id="GO:0051085">
    <property type="term" value="P:chaperone cofactor-dependent protein refolding"/>
    <property type="evidence" value="ECO:0007669"/>
    <property type="project" value="TreeGrafter"/>
</dbReference>
<dbReference type="GO" id="GO:0006260">
    <property type="term" value="P:DNA replication"/>
    <property type="evidence" value="ECO:0007669"/>
    <property type="project" value="UniProtKB-KW"/>
</dbReference>
<dbReference type="GO" id="GO:0042026">
    <property type="term" value="P:protein refolding"/>
    <property type="evidence" value="ECO:0007669"/>
    <property type="project" value="TreeGrafter"/>
</dbReference>
<dbReference type="GO" id="GO:0009408">
    <property type="term" value="P:response to heat"/>
    <property type="evidence" value="ECO:0007669"/>
    <property type="project" value="InterPro"/>
</dbReference>
<dbReference type="CDD" id="cd06257">
    <property type="entry name" value="DnaJ"/>
    <property type="match status" value="1"/>
</dbReference>
<dbReference type="CDD" id="cd10747">
    <property type="entry name" value="DnaJ_C"/>
    <property type="match status" value="1"/>
</dbReference>
<dbReference type="CDD" id="cd10719">
    <property type="entry name" value="DnaJ_zf"/>
    <property type="match status" value="1"/>
</dbReference>
<dbReference type="FunFam" id="1.10.287.110:FF:000034">
    <property type="entry name" value="Chaperone protein DnaJ"/>
    <property type="match status" value="1"/>
</dbReference>
<dbReference type="FunFam" id="2.10.230.10:FF:000002">
    <property type="entry name" value="Molecular chaperone DnaJ"/>
    <property type="match status" value="1"/>
</dbReference>
<dbReference type="FunFam" id="2.60.260.20:FF:000004">
    <property type="entry name" value="Molecular chaperone DnaJ"/>
    <property type="match status" value="1"/>
</dbReference>
<dbReference type="Gene3D" id="1.10.287.110">
    <property type="entry name" value="DnaJ domain"/>
    <property type="match status" value="1"/>
</dbReference>
<dbReference type="Gene3D" id="2.10.230.10">
    <property type="entry name" value="Heat shock protein DnaJ, cysteine-rich domain"/>
    <property type="match status" value="1"/>
</dbReference>
<dbReference type="Gene3D" id="2.60.260.20">
    <property type="entry name" value="Urease metallochaperone UreE, N-terminal domain"/>
    <property type="match status" value="2"/>
</dbReference>
<dbReference type="HAMAP" id="MF_01152">
    <property type="entry name" value="DnaJ"/>
    <property type="match status" value="1"/>
</dbReference>
<dbReference type="InterPro" id="IPR012724">
    <property type="entry name" value="DnaJ"/>
</dbReference>
<dbReference type="InterPro" id="IPR002939">
    <property type="entry name" value="DnaJ_C"/>
</dbReference>
<dbReference type="InterPro" id="IPR001623">
    <property type="entry name" value="DnaJ_domain"/>
</dbReference>
<dbReference type="InterPro" id="IPR018253">
    <property type="entry name" value="DnaJ_domain_CS"/>
</dbReference>
<dbReference type="InterPro" id="IPR008971">
    <property type="entry name" value="HSP40/DnaJ_pept-bd"/>
</dbReference>
<dbReference type="InterPro" id="IPR001305">
    <property type="entry name" value="HSP_DnaJ_Cys-rich_dom"/>
</dbReference>
<dbReference type="InterPro" id="IPR036410">
    <property type="entry name" value="HSP_DnaJ_Cys-rich_dom_sf"/>
</dbReference>
<dbReference type="InterPro" id="IPR036869">
    <property type="entry name" value="J_dom_sf"/>
</dbReference>
<dbReference type="NCBIfam" id="TIGR02349">
    <property type="entry name" value="DnaJ_bact"/>
    <property type="match status" value="1"/>
</dbReference>
<dbReference type="NCBIfam" id="NF008035">
    <property type="entry name" value="PRK10767.1"/>
    <property type="match status" value="1"/>
</dbReference>
<dbReference type="PANTHER" id="PTHR43096:SF48">
    <property type="entry name" value="CHAPERONE PROTEIN DNAJ"/>
    <property type="match status" value="1"/>
</dbReference>
<dbReference type="PANTHER" id="PTHR43096">
    <property type="entry name" value="DNAJ HOMOLOG 1, MITOCHONDRIAL-RELATED"/>
    <property type="match status" value="1"/>
</dbReference>
<dbReference type="Pfam" id="PF00226">
    <property type="entry name" value="DnaJ"/>
    <property type="match status" value="1"/>
</dbReference>
<dbReference type="Pfam" id="PF01556">
    <property type="entry name" value="DnaJ_C"/>
    <property type="match status" value="1"/>
</dbReference>
<dbReference type="Pfam" id="PF00684">
    <property type="entry name" value="DnaJ_CXXCXGXG"/>
    <property type="match status" value="1"/>
</dbReference>
<dbReference type="PRINTS" id="PR00625">
    <property type="entry name" value="JDOMAIN"/>
</dbReference>
<dbReference type="SMART" id="SM00271">
    <property type="entry name" value="DnaJ"/>
    <property type="match status" value="1"/>
</dbReference>
<dbReference type="SUPFAM" id="SSF46565">
    <property type="entry name" value="Chaperone J-domain"/>
    <property type="match status" value="1"/>
</dbReference>
<dbReference type="SUPFAM" id="SSF57938">
    <property type="entry name" value="DnaJ/Hsp40 cysteine-rich domain"/>
    <property type="match status" value="1"/>
</dbReference>
<dbReference type="SUPFAM" id="SSF49493">
    <property type="entry name" value="HSP40/DnaJ peptide-binding domain"/>
    <property type="match status" value="2"/>
</dbReference>
<dbReference type="PROSITE" id="PS00636">
    <property type="entry name" value="DNAJ_1"/>
    <property type="match status" value="1"/>
</dbReference>
<dbReference type="PROSITE" id="PS50076">
    <property type="entry name" value="DNAJ_2"/>
    <property type="match status" value="1"/>
</dbReference>
<dbReference type="PROSITE" id="PS51188">
    <property type="entry name" value="ZF_CR"/>
    <property type="match status" value="1"/>
</dbReference>
<accession>Q8YE77</accession>
<proteinExistence type="inferred from homology"/>
<feature type="chain" id="PRO_0000070742" description="Chaperone protein DnaJ">
    <location>
        <begin position="1"/>
        <end position="377"/>
    </location>
</feature>
<feature type="domain" description="J" evidence="1">
    <location>
        <begin position="4"/>
        <end position="69"/>
    </location>
</feature>
<feature type="repeat" description="CXXCXGXG motif">
    <location>
        <begin position="148"/>
        <end position="155"/>
    </location>
</feature>
<feature type="repeat" description="CXXCXGXG motif">
    <location>
        <begin position="165"/>
        <end position="172"/>
    </location>
</feature>
<feature type="repeat" description="CXXCXGXG motif">
    <location>
        <begin position="187"/>
        <end position="194"/>
    </location>
</feature>
<feature type="repeat" description="CXXCXGXG motif">
    <location>
        <begin position="201"/>
        <end position="208"/>
    </location>
</feature>
<feature type="zinc finger region" description="CR-type" evidence="1">
    <location>
        <begin position="135"/>
        <end position="213"/>
    </location>
</feature>
<feature type="binding site" evidence="1">
    <location>
        <position position="148"/>
    </location>
    <ligand>
        <name>Zn(2+)</name>
        <dbReference type="ChEBI" id="CHEBI:29105"/>
        <label>1</label>
    </ligand>
</feature>
<feature type="binding site" evidence="1">
    <location>
        <position position="151"/>
    </location>
    <ligand>
        <name>Zn(2+)</name>
        <dbReference type="ChEBI" id="CHEBI:29105"/>
        <label>1</label>
    </ligand>
</feature>
<feature type="binding site" evidence="1">
    <location>
        <position position="165"/>
    </location>
    <ligand>
        <name>Zn(2+)</name>
        <dbReference type="ChEBI" id="CHEBI:29105"/>
        <label>2</label>
    </ligand>
</feature>
<feature type="binding site" evidence="1">
    <location>
        <position position="168"/>
    </location>
    <ligand>
        <name>Zn(2+)</name>
        <dbReference type="ChEBI" id="CHEBI:29105"/>
        <label>2</label>
    </ligand>
</feature>
<feature type="binding site" evidence="1">
    <location>
        <position position="187"/>
    </location>
    <ligand>
        <name>Zn(2+)</name>
        <dbReference type="ChEBI" id="CHEBI:29105"/>
        <label>2</label>
    </ligand>
</feature>
<feature type="binding site" evidence="1">
    <location>
        <position position="190"/>
    </location>
    <ligand>
        <name>Zn(2+)</name>
        <dbReference type="ChEBI" id="CHEBI:29105"/>
        <label>2</label>
    </ligand>
</feature>
<feature type="binding site" evidence="1">
    <location>
        <position position="201"/>
    </location>
    <ligand>
        <name>Zn(2+)</name>
        <dbReference type="ChEBI" id="CHEBI:29105"/>
        <label>1</label>
    </ligand>
</feature>
<feature type="binding site" evidence="1">
    <location>
        <position position="204"/>
    </location>
    <ligand>
        <name>Zn(2+)</name>
        <dbReference type="ChEBI" id="CHEBI:29105"/>
        <label>1</label>
    </ligand>
</feature>